<organism>
    <name type="scientific">Bordetella pertussis (strain Tohama I / ATCC BAA-589 / NCTC 13251)</name>
    <dbReference type="NCBI Taxonomy" id="257313"/>
    <lineage>
        <taxon>Bacteria</taxon>
        <taxon>Pseudomonadati</taxon>
        <taxon>Pseudomonadota</taxon>
        <taxon>Betaproteobacteria</taxon>
        <taxon>Burkholderiales</taxon>
        <taxon>Alcaligenaceae</taxon>
        <taxon>Bordetella</taxon>
    </lineage>
</organism>
<evidence type="ECO:0000255" key="1">
    <source>
        <dbReference type="HAMAP-Rule" id="MF_01646"/>
    </source>
</evidence>
<name>CYSG_BORPE</name>
<protein>
    <recommendedName>
        <fullName evidence="1">Siroheme synthase</fullName>
    </recommendedName>
    <domain>
        <recommendedName>
            <fullName evidence="1">Uroporphyrinogen-III C-methyltransferase</fullName>
            <shortName evidence="1">Urogen III methylase</shortName>
            <ecNumber evidence="1">2.1.1.107</ecNumber>
        </recommendedName>
        <alternativeName>
            <fullName evidence="1">SUMT</fullName>
        </alternativeName>
        <alternativeName>
            <fullName evidence="1">Uroporphyrinogen III methylase</fullName>
            <shortName evidence="1">UROM</shortName>
        </alternativeName>
    </domain>
    <domain>
        <recommendedName>
            <fullName evidence="1">Precorrin-2 dehydrogenase</fullName>
            <ecNumber evidence="1">1.3.1.76</ecNumber>
        </recommendedName>
    </domain>
    <domain>
        <recommendedName>
            <fullName evidence="1">Sirohydrochlorin ferrochelatase</fullName>
            <ecNumber evidence="1">4.99.1.4</ecNumber>
        </recommendedName>
    </domain>
</protein>
<proteinExistence type="inferred from homology"/>
<sequence length="473" mass="50524">MTLFPIFADLTGRRVLVVGGGAVAVRKTQALLQAGAEVVVGAPRLDPALAALAEQGGIARLDGGFEPAWLAGAWLVVAATDDRAVNAAVSEAARARRVFCNVVDDAELSSFQVPSVVDRSPLIVAISSSGVAPVLARRLRERIESLFDHSLGQLAALAARYRPRIRAARPDLGQRRRFYDWLLDGPVAARLRQQQPGLAEQELEQALRAPQAAPRGSVVLVGAGPGDPGLLTLKALRALNEADIILYDRLVSEGVLALARRDAERVPVGKLPGKGHDATQARIHALMLAQARAGRRVVRLKGGDAFIFGRGGEELEYLRAHGVPYEVVPGITAALACAAYAGMPLTHRDHAQSVRMVTAHCRADQDTLDWAGLARDQQTLAFYMGVGQLDYVTARLLEHGRAPATPFALIENGSRPEQRVVTGTLADLPEIARRRGVRPPALLVIGEVAALADTLQWFGQHQRGLPGPQALAA</sequence>
<accession>Q7VZ77</accession>
<keyword id="KW-0169">Cobalamin biosynthesis</keyword>
<keyword id="KW-0456">Lyase</keyword>
<keyword id="KW-0489">Methyltransferase</keyword>
<keyword id="KW-0511">Multifunctional enzyme</keyword>
<keyword id="KW-0520">NAD</keyword>
<keyword id="KW-0560">Oxidoreductase</keyword>
<keyword id="KW-0597">Phosphoprotein</keyword>
<keyword id="KW-0627">Porphyrin biosynthesis</keyword>
<keyword id="KW-1185">Reference proteome</keyword>
<keyword id="KW-0949">S-adenosyl-L-methionine</keyword>
<keyword id="KW-0808">Transferase</keyword>
<comment type="function">
    <text evidence="1">Multifunctional enzyme that catalyzes the SAM-dependent methylations of uroporphyrinogen III at position C-2 and C-7 to form precorrin-2 via precorrin-1. Then it catalyzes the NAD-dependent ring dehydrogenation of precorrin-2 to yield sirohydrochlorin. Finally, it catalyzes the ferrochelation of sirohydrochlorin to yield siroheme.</text>
</comment>
<comment type="catalytic activity">
    <reaction evidence="1">
        <text>uroporphyrinogen III + 2 S-adenosyl-L-methionine = precorrin-2 + 2 S-adenosyl-L-homocysteine + H(+)</text>
        <dbReference type="Rhea" id="RHEA:32459"/>
        <dbReference type="ChEBI" id="CHEBI:15378"/>
        <dbReference type="ChEBI" id="CHEBI:57308"/>
        <dbReference type="ChEBI" id="CHEBI:57856"/>
        <dbReference type="ChEBI" id="CHEBI:58827"/>
        <dbReference type="ChEBI" id="CHEBI:59789"/>
        <dbReference type="EC" id="2.1.1.107"/>
    </reaction>
</comment>
<comment type="catalytic activity">
    <reaction evidence="1">
        <text>precorrin-2 + NAD(+) = sirohydrochlorin + NADH + 2 H(+)</text>
        <dbReference type="Rhea" id="RHEA:15613"/>
        <dbReference type="ChEBI" id="CHEBI:15378"/>
        <dbReference type="ChEBI" id="CHEBI:57540"/>
        <dbReference type="ChEBI" id="CHEBI:57945"/>
        <dbReference type="ChEBI" id="CHEBI:58351"/>
        <dbReference type="ChEBI" id="CHEBI:58827"/>
        <dbReference type="EC" id="1.3.1.76"/>
    </reaction>
</comment>
<comment type="catalytic activity">
    <reaction evidence="1">
        <text>siroheme + 2 H(+) = sirohydrochlorin + Fe(2+)</text>
        <dbReference type="Rhea" id="RHEA:24360"/>
        <dbReference type="ChEBI" id="CHEBI:15378"/>
        <dbReference type="ChEBI" id="CHEBI:29033"/>
        <dbReference type="ChEBI" id="CHEBI:58351"/>
        <dbReference type="ChEBI" id="CHEBI:60052"/>
        <dbReference type="EC" id="4.99.1.4"/>
    </reaction>
</comment>
<comment type="pathway">
    <text evidence="1">Cofactor biosynthesis; adenosylcobalamin biosynthesis; precorrin-2 from uroporphyrinogen III: step 1/1.</text>
</comment>
<comment type="pathway">
    <text evidence="1">Cofactor biosynthesis; adenosylcobalamin biosynthesis; sirohydrochlorin from precorrin-2: step 1/1.</text>
</comment>
<comment type="pathway">
    <text evidence="1">Porphyrin-containing compound metabolism; siroheme biosynthesis; precorrin-2 from uroporphyrinogen III: step 1/1.</text>
</comment>
<comment type="pathway">
    <text evidence="1">Porphyrin-containing compound metabolism; siroheme biosynthesis; siroheme from sirohydrochlorin: step 1/1.</text>
</comment>
<comment type="pathway">
    <text evidence="1">Porphyrin-containing compound metabolism; siroheme biosynthesis; sirohydrochlorin from precorrin-2: step 1/1.</text>
</comment>
<comment type="similarity">
    <text evidence="1">In the N-terminal section; belongs to the precorrin-2 dehydrogenase / sirohydrochlorin ferrochelatase family.</text>
</comment>
<comment type="similarity">
    <text evidence="1">In the C-terminal section; belongs to the precorrin methyltransferase family.</text>
</comment>
<reference key="1">
    <citation type="journal article" date="2003" name="Nat. Genet.">
        <title>Comparative analysis of the genome sequences of Bordetella pertussis, Bordetella parapertussis and Bordetella bronchiseptica.</title>
        <authorList>
            <person name="Parkhill J."/>
            <person name="Sebaihia M."/>
            <person name="Preston A."/>
            <person name="Murphy L.D."/>
            <person name="Thomson N.R."/>
            <person name="Harris D.E."/>
            <person name="Holden M.T.G."/>
            <person name="Churcher C.M."/>
            <person name="Bentley S.D."/>
            <person name="Mungall K.L."/>
            <person name="Cerdeno-Tarraga A.-M."/>
            <person name="Temple L."/>
            <person name="James K.D."/>
            <person name="Harris B."/>
            <person name="Quail M.A."/>
            <person name="Achtman M."/>
            <person name="Atkin R."/>
            <person name="Baker S."/>
            <person name="Basham D."/>
            <person name="Bason N."/>
            <person name="Cherevach I."/>
            <person name="Chillingworth T."/>
            <person name="Collins M."/>
            <person name="Cronin A."/>
            <person name="Davis P."/>
            <person name="Doggett J."/>
            <person name="Feltwell T."/>
            <person name="Goble A."/>
            <person name="Hamlin N."/>
            <person name="Hauser H."/>
            <person name="Holroyd S."/>
            <person name="Jagels K."/>
            <person name="Leather S."/>
            <person name="Moule S."/>
            <person name="Norberczak H."/>
            <person name="O'Neil S."/>
            <person name="Ormond D."/>
            <person name="Price C."/>
            <person name="Rabbinowitsch E."/>
            <person name="Rutter S."/>
            <person name="Sanders M."/>
            <person name="Saunders D."/>
            <person name="Seeger K."/>
            <person name="Sharp S."/>
            <person name="Simmonds M."/>
            <person name="Skelton J."/>
            <person name="Squares R."/>
            <person name="Squares S."/>
            <person name="Stevens K."/>
            <person name="Unwin L."/>
            <person name="Whitehead S."/>
            <person name="Barrell B.G."/>
            <person name="Maskell D.J."/>
        </authorList>
    </citation>
    <scope>NUCLEOTIDE SEQUENCE [LARGE SCALE GENOMIC DNA]</scope>
    <source>
        <strain>Tohama I / ATCC BAA-589 / NCTC 13251</strain>
    </source>
</reference>
<feature type="chain" id="PRO_0000330499" description="Siroheme synthase">
    <location>
        <begin position="1"/>
        <end position="473"/>
    </location>
</feature>
<feature type="region of interest" description="Precorrin-2 dehydrogenase /sirohydrochlorin ferrochelatase" evidence="1">
    <location>
        <begin position="1"/>
        <end position="203"/>
    </location>
</feature>
<feature type="region of interest" description="Uroporphyrinogen-III C-methyltransferase" evidence="1">
    <location>
        <begin position="216"/>
        <end position="473"/>
    </location>
</feature>
<feature type="active site" description="Proton acceptor" evidence="1">
    <location>
        <position position="248"/>
    </location>
</feature>
<feature type="active site" description="Proton donor" evidence="1">
    <location>
        <position position="270"/>
    </location>
</feature>
<feature type="binding site" evidence="1">
    <location>
        <begin position="22"/>
        <end position="23"/>
    </location>
    <ligand>
        <name>NAD(+)</name>
        <dbReference type="ChEBI" id="CHEBI:57540"/>
    </ligand>
</feature>
<feature type="binding site" evidence="1">
    <location>
        <begin position="43"/>
        <end position="44"/>
    </location>
    <ligand>
        <name>NAD(+)</name>
        <dbReference type="ChEBI" id="CHEBI:57540"/>
    </ligand>
</feature>
<feature type="binding site" evidence="1">
    <location>
        <position position="225"/>
    </location>
    <ligand>
        <name>S-adenosyl-L-methionine</name>
        <dbReference type="ChEBI" id="CHEBI:59789"/>
    </ligand>
</feature>
<feature type="binding site" evidence="1">
    <location>
        <begin position="302"/>
        <end position="304"/>
    </location>
    <ligand>
        <name>S-adenosyl-L-methionine</name>
        <dbReference type="ChEBI" id="CHEBI:59789"/>
    </ligand>
</feature>
<feature type="binding site" evidence="1">
    <location>
        <position position="307"/>
    </location>
    <ligand>
        <name>S-adenosyl-L-methionine</name>
        <dbReference type="ChEBI" id="CHEBI:59789"/>
    </ligand>
</feature>
<feature type="binding site" evidence="1">
    <location>
        <begin position="332"/>
        <end position="333"/>
    </location>
    <ligand>
        <name>S-adenosyl-L-methionine</name>
        <dbReference type="ChEBI" id="CHEBI:59789"/>
    </ligand>
</feature>
<feature type="binding site" evidence="1">
    <location>
        <position position="384"/>
    </location>
    <ligand>
        <name>S-adenosyl-L-methionine</name>
        <dbReference type="ChEBI" id="CHEBI:59789"/>
    </ligand>
</feature>
<feature type="binding site" evidence="1">
    <location>
        <position position="413"/>
    </location>
    <ligand>
        <name>S-adenosyl-L-methionine</name>
        <dbReference type="ChEBI" id="CHEBI:59789"/>
    </ligand>
</feature>
<feature type="modified residue" description="Phosphoserine" evidence="1">
    <location>
        <position position="128"/>
    </location>
</feature>
<dbReference type="EC" id="2.1.1.107" evidence="1"/>
<dbReference type="EC" id="1.3.1.76" evidence="1"/>
<dbReference type="EC" id="4.99.1.4" evidence="1"/>
<dbReference type="EMBL" id="BX640414">
    <property type="protein sequence ID" value="CAE41354.1"/>
    <property type="molecule type" value="Genomic_DNA"/>
</dbReference>
<dbReference type="RefSeq" id="NP_879840.1">
    <property type="nucleotide sequence ID" value="NC_002929.2"/>
</dbReference>
<dbReference type="RefSeq" id="WP_010930160.1">
    <property type="nucleotide sequence ID" value="NZ_CP039022.1"/>
</dbReference>
<dbReference type="SMR" id="Q7VZ77"/>
<dbReference type="STRING" id="257313.BP1055"/>
<dbReference type="PaxDb" id="257313-BP1055"/>
<dbReference type="GeneID" id="69600978"/>
<dbReference type="KEGG" id="bpe:BP1055"/>
<dbReference type="PATRIC" id="fig|257313.5.peg.1127"/>
<dbReference type="eggNOG" id="COG0007">
    <property type="taxonomic scope" value="Bacteria"/>
</dbReference>
<dbReference type="eggNOG" id="COG1648">
    <property type="taxonomic scope" value="Bacteria"/>
</dbReference>
<dbReference type="HOGENOM" id="CLU_011276_2_0_4"/>
<dbReference type="UniPathway" id="UPA00148">
    <property type="reaction ID" value="UER00211"/>
</dbReference>
<dbReference type="UniPathway" id="UPA00148">
    <property type="reaction ID" value="UER00222"/>
</dbReference>
<dbReference type="UniPathway" id="UPA00262">
    <property type="reaction ID" value="UER00211"/>
</dbReference>
<dbReference type="UniPathway" id="UPA00262">
    <property type="reaction ID" value="UER00222"/>
</dbReference>
<dbReference type="UniPathway" id="UPA00262">
    <property type="reaction ID" value="UER00376"/>
</dbReference>
<dbReference type="Proteomes" id="UP000002676">
    <property type="component" value="Chromosome"/>
</dbReference>
<dbReference type="GO" id="GO:0051287">
    <property type="term" value="F:NAD binding"/>
    <property type="evidence" value="ECO:0007669"/>
    <property type="project" value="InterPro"/>
</dbReference>
<dbReference type="GO" id="GO:0043115">
    <property type="term" value="F:precorrin-2 dehydrogenase activity"/>
    <property type="evidence" value="ECO:0007669"/>
    <property type="project" value="UniProtKB-UniRule"/>
</dbReference>
<dbReference type="GO" id="GO:0051266">
    <property type="term" value="F:sirohydrochlorin ferrochelatase activity"/>
    <property type="evidence" value="ECO:0007669"/>
    <property type="project" value="UniProtKB-EC"/>
</dbReference>
<dbReference type="GO" id="GO:0004851">
    <property type="term" value="F:uroporphyrin-III C-methyltransferase activity"/>
    <property type="evidence" value="ECO:0007669"/>
    <property type="project" value="UniProtKB-UniRule"/>
</dbReference>
<dbReference type="GO" id="GO:0009236">
    <property type="term" value="P:cobalamin biosynthetic process"/>
    <property type="evidence" value="ECO:0007669"/>
    <property type="project" value="UniProtKB-UniRule"/>
</dbReference>
<dbReference type="GO" id="GO:0032259">
    <property type="term" value="P:methylation"/>
    <property type="evidence" value="ECO:0007669"/>
    <property type="project" value="UniProtKB-KW"/>
</dbReference>
<dbReference type="GO" id="GO:0019354">
    <property type="term" value="P:siroheme biosynthetic process"/>
    <property type="evidence" value="ECO:0007669"/>
    <property type="project" value="UniProtKB-UniRule"/>
</dbReference>
<dbReference type="CDD" id="cd11642">
    <property type="entry name" value="SUMT"/>
    <property type="match status" value="1"/>
</dbReference>
<dbReference type="FunFam" id="3.30.950.10:FF:000001">
    <property type="entry name" value="Siroheme synthase"/>
    <property type="match status" value="1"/>
</dbReference>
<dbReference type="FunFam" id="3.40.1010.10:FF:000001">
    <property type="entry name" value="Siroheme synthase"/>
    <property type="match status" value="1"/>
</dbReference>
<dbReference type="Gene3D" id="3.40.1010.10">
    <property type="entry name" value="Cobalt-precorrin-4 Transmethylase, Domain 1"/>
    <property type="match status" value="1"/>
</dbReference>
<dbReference type="Gene3D" id="3.30.950.10">
    <property type="entry name" value="Methyltransferase, Cobalt-precorrin-4 Transmethylase, Domain 2"/>
    <property type="match status" value="1"/>
</dbReference>
<dbReference type="Gene3D" id="3.40.50.720">
    <property type="entry name" value="NAD(P)-binding Rossmann-like Domain"/>
    <property type="match status" value="1"/>
</dbReference>
<dbReference type="Gene3D" id="1.10.8.210">
    <property type="entry name" value="Sirohaem synthase, dimerisation domain"/>
    <property type="match status" value="1"/>
</dbReference>
<dbReference type="Gene3D" id="3.30.160.110">
    <property type="entry name" value="Siroheme synthase, domain 2"/>
    <property type="match status" value="1"/>
</dbReference>
<dbReference type="HAMAP" id="MF_01646">
    <property type="entry name" value="Siroheme_synth"/>
    <property type="match status" value="1"/>
</dbReference>
<dbReference type="InterPro" id="IPR000878">
    <property type="entry name" value="4pyrrol_Mease"/>
</dbReference>
<dbReference type="InterPro" id="IPR035996">
    <property type="entry name" value="4pyrrol_Methylase_sf"/>
</dbReference>
<dbReference type="InterPro" id="IPR014777">
    <property type="entry name" value="4pyrrole_Mease_sub1"/>
</dbReference>
<dbReference type="InterPro" id="IPR014776">
    <property type="entry name" value="4pyrrole_Mease_sub2"/>
</dbReference>
<dbReference type="InterPro" id="IPR006366">
    <property type="entry name" value="CobA/CysG_C"/>
</dbReference>
<dbReference type="InterPro" id="IPR036291">
    <property type="entry name" value="NAD(P)-bd_dom_sf"/>
</dbReference>
<dbReference type="InterPro" id="IPR050161">
    <property type="entry name" value="Siro_Cobalamin_biosynth"/>
</dbReference>
<dbReference type="InterPro" id="IPR037115">
    <property type="entry name" value="Sirohaem_synt_dimer_dom_sf"/>
</dbReference>
<dbReference type="InterPro" id="IPR012409">
    <property type="entry name" value="Sirohaem_synth"/>
</dbReference>
<dbReference type="InterPro" id="IPR028281">
    <property type="entry name" value="Sirohaem_synthase_central"/>
</dbReference>
<dbReference type="InterPro" id="IPR019478">
    <property type="entry name" value="Sirohaem_synthase_dimer_dom"/>
</dbReference>
<dbReference type="InterPro" id="IPR006367">
    <property type="entry name" value="Sirohaem_synthase_N"/>
</dbReference>
<dbReference type="InterPro" id="IPR003043">
    <property type="entry name" value="Uropor_MeTrfase_CS"/>
</dbReference>
<dbReference type="NCBIfam" id="TIGR01469">
    <property type="entry name" value="cobA_cysG_Cterm"/>
    <property type="match status" value="1"/>
</dbReference>
<dbReference type="NCBIfam" id="TIGR01470">
    <property type="entry name" value="cysG_Nterm"/>
    <property type="match status" value="1"/>
</dbReference>
<dbReference type="NCBIfam" id="NF004790">
    <property type="entry name" value="PRK06136.1"/>
    <property type="match status" value="1"/>
</dbReference>
<dbReference type="NCBIfam" id="NF007922">
    <property type="entry name" value="PRK10637.1"/>
    <property type="match status" value="1"/>
</dbReference>
<dbReference type="PANTHER" id="PTHR45790:SF1">
    <property type="entry name" value="SIROHEME SYNTHASE"/>
    <property type="match status" value="1"/>
</dbReference>
<dbReference type="PANTHER" id="PTHR45790">
    <property type="entry name" value="SIROHEME SYNTHASE-RELATED"/>
    <property type="match status" value="1"/>
</dbReference>
<dbReference type="Pfam" id="PF10414">
    <property type="entry name" value="CysG_dimeriser"/>
    <property type="match status" value="1"/>
</dbReference>
<dbReference type="Pfam" id="PF13241">
    <property type="entry name" value="NAD_binding_7"/>
    <property type="match status" value="1"/>
</dbReference>
<dbReference type="Pfam" id="PF14824">
    <property type="entry name" value="Sirohm_synth_M"/>
    <property type="match status" value="1"/>
</dbReference>
<dbReference type="Pfam" id="PF00590">
    <property type="entry name" value="TP_methylase"/>
    <property type="match status" value="1"/>
</dbReference>
<dbReference type="PIRSF" id="PIRSF036426">
    <property type="entry name" value="Sirohaem_synth"/>
    <property type="match status" value="1"/>
</dbReference>
<dbReference type="SUPFAM" id="SSF51735">
    <property type="entry name" value="NAD(P)-binding Rossmann-fold domains"/>
    <property type="match status" value="1"/>
</dbReference>
<dbReference type="SUPFAM" id="SSF75615">
    <property type="entry name" value="Siroheme synthase middle domains-like"/>
    <property type="match status" value="1"/>
</dbReference>
<dbReference type="SUPFAM" id="SSF53790">
    <property type="entry name" value="Tetrapyrrole methylase"/>
    <property type="match status" value="1"/>
</dbReference>
<dbReference type="PROSITE" id="PS00839">
    <property type="entry name" value="SUMT_1"/>
    <property type="match status" value="1"/>
</dbReference>
<dbReference type="PROSITE" id="PS00840">
    <property type="entry name" value="SUMT_2"/>
    <property type="match status" value="1"/>
</dbReference>
<gene>
    <name evidence="1" type="primary">cysG</name>
    <name type="ordered locus">BP1055</name>
</gene>